<comment type="function">
    <text evidence="1">Catalyzes the decarboxylation of 3-keto-L-gulonate-6-P into L-xylulose-5-P. Is involved in the anaerobic L-ascorbate utilization.</text>
</comment>
<comment type="catalytic activity">
    <reaction evidence="1">
        <text>3-dehydro-L-gulonate 6-phosphate + H(+) = L-xylulose 5-phosphate + CO2</text>
        <dbReference type="Rhea" id="RHEA:14353"/>
        <dbReference type="ChEBI" id="CHEBI:15378"/>
        <dbReference type="ChEBI" id="CHEBI:16526"/>
        <dbReference type="ChEBI" id="CHEBI:57829"/>
        <dbReference type="ChEBI" id="CHEBI:58774"/>
        <dbReference type="EC" id="4.1.1.85"/>
    </reaction>
</comment>
<comment type="cofactor">
    <cofactor evidence="1">
        <name>Mg(2+)</name>
        <dbReference type="ChEBI" id="CHEBI:18420"/>
    </cofactor>
    <text evidence="1">Binds 1 Mg(2+) ion per subunit.</text>
</comment>
<comment type="pathway">
    <text evidence="1">Cofactor degradation; L-ascorbate degradation; D-xylulose 5-phosphate from L-ascorbate: step 2/4.</text>
</comment>
<comment type="subunit">
    <text evidence="1">Homodimer.</text>
</comment>
<comment type="induction">
    <text evidence="1">Induced by L-ascorbate. Repressed by UlaR.</text>
</comment>
<comment type="similarity">
    <text evidence="1">Belongs to the HPS/KGPDC family. KGPDC subfamily.</text>
</comment>
<organism>
    <name type="scientific">Salmonella typhimurium (strain LT2 / SGSC1412 / ATCC 700720)</name>
    <dbReference type="NCBI Taxonomy" id="99287"/>
    <lineage>
        <taxon>Bacteria</taxon>
        <taxon>Pseudomonadati</taxon>
        <taxon>Pseudomonadota</taxon>
        <taxon>Gammaproteobacteria</taxon>
        <taxon>Enterobacterales</taxon>
        <taxon>Enterobacteriaceae</taxon>
        <taxon>Salmonella</taxon>
    </lineage>
</organism>
<feature type="chain" id="PRO_0000236094" description="3-keto-L-gulonate-6-phosphate decarboxylase UlaD">
    <location>
        <begin position="1"/>
        <end position="216"/>
    </location>
</feature>
<feature type="binding site" evidence="1">
    <location>
        <position position="11"/>
    </location>
    <ligand>
        <name>substrate</name>
    </ligand>
</feature>
<feature type="binding site" evidence="1">
    <location>
        <position position="33"/>
    </location>
    <ligand>
        <name>Mg(2+)</name>
        <dbReference type="ChEBI" id="CHEBI:18420"/>
    </ligand>
</feature>
<feature type="binding site" evidence="1">
    <location>
        <position position="62"/>
    </location>
    <ligand>
        <name>Mg(2+)</name>
        <dbReference type="ChEBI" id="CHEBI:18420"/>
    </ligand>
</feature>
<feature type="binding site" evidence="1">
    <location>
        <position position="192"/>
    </location>
    <ligand>
        <name>substrate</name>
    </ligand>
</feature>
<feature type="site" description="Transition state stabilizer" evidence="1">
    <location>
        <position position="64"/>
    </location>
</feature>
<feature type="site" description="Transition state stabilizer" evidence="1">
    <location>
        <position position="67"/>
    </location>
</feature>
<accession>Q8ZK87</accession>
<dbReference type="EC" id="4.1.1.85" evidence="1"/>
<dbReference type="EMBL" id="AE006468">
    <property type="protein sequence ID" value="AAL23206.1"/>
    <property type="molecule type" value="Genomic_DNA"/>
</dbReference>
<dbReference type="RefSeq" id="WP_000056761.1">
    <property type="nucleotide sequence ID" value="NC_003197.2"/>
</dbReference>
<dbReference type="SMR" id="Q8ZK87"/>
<dbReference type="STRING" id="99287.STM4386"/>
<dbReference type="PaxDb" id="99287-STM4386"/>
<dbReference type="KEGG" id="stm:STM4386"/>
<dbReference type="PATRIC" id="fig|99287.12.peg.4611"/>
<dbReference type="HOGENOM" id="CLU_081825_0_0_6"/>
<dbReference type="PhylomeDB" id="Q8ZK87"/>
<dbReference type="BioCyc" id="SENT99287:STM4386-MONOMER"/>
<dbReference type="UniPathway" id="UPA00263">
    <property type="reaction ID" value="UER00378"/>
</dbReference>
<dbReference type="Proteomes" id="UP000001014">
    <property type="component" value="Chromosome"/>
</dbReference>
<dbReference type="GO" id="GO:0033982">
    <property type="term" value="F:3-dehydro-L-gulonate-6-phosphate decarboxylase activity"/>
    <property type="evidence" value="ECO:0000318"/>
    <property type="project" value="GO_Central"/>
</dbReference>
<dbReference type="GO" id="GO:0000287">
    <property type="term" value="F:magnesium ion binding"/>
    <property type="evidence" value="ECO:0007669"/>
    <property type="project" value="UniProtKB-UniRule"/>
</dbReference>
<dbReference type="GO" id="GO:0004590">
    <property type="term" value="F:orotidine-5'-phosphate decarboxylase activity"/>
    <property type="evidence" value="ECO:0007669"/>
    <property type="project" value="InterPro"/>
</dbReference>
<dbReference type="GO" id="GO:0006207">
    <property type="term" value="P:'de novo' pyrimidine nucleobase biosynthetic process"/>
    <property type="evidence" value="ECO:0007669"/>
    <property type="project" value="InterPro"/>
</dbReference>
<dbReference type="GO" id="GO:0019854">
    <property type="term" value="P:L-ascorbic acid catabolic process"/>
    <property type="evidence" value="ECO:0000318"/>
    <property type="project" value="GO_Central"/>
</dbReference>
<dbReference type="CDD" id="cd04726">
    <property type="entry name" value="KGPDC_HPS"/>
    <property type="match status" value="1"/>
</dbReference>
<dbReference type="FunFam" id="3.20.20.70:FF:000022">
    <property type="entry name" value="3-keto-L-gulonate-6-phosphate decarboxylase UlaD"/>
    <property type="match status" value="1"/>
</dbReference>
<dbReference type="Gene3D" id="3.20.20.70">
    <property type="entry name" value="Aldolase class I"/>
    <property type="match status" value="1"/>
</dbReference>
<dbReference type="HAMAP" id="MF_01267">
    <property type="entry name" value="UlaD"/>
    <property type="match status" value="1"/>
</dbReference>
<dbReference type="InterPro" id="IPR023942">
    <property type="entry name" value="3-keto-L-gulonate6Pdecase_UlaD"/>
</dbReference>
<dbReference type="InterPro" id="IPR013785">
    <property type="entry name" value="Aldolase_TIM"/>
</dbReference>
<dbReference type="InterPro" id="IPR041710">
    <property type="entry name" value="HPS/KGPDC"/>
</dbReference>
<dbReference type="InterPro" id="IPR001754">
    <property type="entry name" value="OMPdeCOase_dom"/>
</dbReference>
<dbReference type="InterPro" id="IPR011060">
    <property type="entry name" value="RibuloseP-bd_barrel"/>
</dbReference>
<dbReference type="NCBIfam" id="NF009832">
    <property type="entry name" value="PRK13306.1"/>
    <property type="match status" value="1"/>
</dbReference>
<dbReference type="PANTHER" id="PTHR35039">
    <property type="entry name" value="3-KETO-L-GULONATE-6-PHOSPHATE DECARBOXYLASE SGBH-RELATED"/>
    <property type="match status" value="1"/>
</dbReference>
<dbReference type="PANTHER" id="PTHR35039:SF3">
    <property type="entry name" value="3-KETO-L-GULONATE-6-PHOSPHATE DECARBOXYLASE SGBH-RELATED"/>
    <property type="match status" value="1"/>
</dbReference>
<dbReference type="Pfam" id="PF00215">
    <property type="entry name" value="OMPdecase"/>
    <property type="match status" value="1"/>
</dbReference>
<dbReference type="SMART" id="SM00934">
    <property type="entry name" value="OMPdecase"/>
    <property type="match status" value="1"/>
</dbReference>
<dbReference type="SUPFAM" id="SSF51366">
    <property type="entry name" value="Ribulose-phoshate binding barrel"/>
    <property type="match status" value="1"/>
</dbReference>
<evidence type="ECO:0000255" key="1">
    <source>
        <dbReference type="HAMAP-Rule" id="MF_01267"/>
    </source>
</evidence>
<name>ULAD_SALTY</name>
<proteinExistence type="inferred from homology"/>
<keyword id="KW-0119">Carbohydrate metabolism</keyword>
<keyword id="KW-0210">Decarboxylase</keyword>
<keyword id="KW-0456">Lyase</keyword>
<keyword id="KW-0460">Magnesium</keyword>
<keyword id="KW-0479">Metal-binding</keyword>
<keyword id="KW-1185">Reference proteome</keyword>
<protein>
    <recommendedName>
        <fullName evidence="1">3-keto-L-gulonate-6-phosphate decarboxylase UlaD</fullName>
        <ecNumber evidence="1">4.1.1.85</ecNumber>
    </recommendedName>
    <alternativeName>
        <fullName evidence="1">3-dehydro-L-gulonate-6-phosphate decarboxylase</fullName>
    </alternativeName>
    <alternativeName>
        <fullName evidence="1">KGPDC</fullName>
    </alternativeName>
    <alternativeName>
        <fullName evidence="1">L-ascorbate utilization protein D</fullName>
    </alternativeName>
</protein>
<gene>
    <name evidence="1" type="primary">ulaD</name>
    <name type="ordered locus">STM4386</name>
</gene>
<sequence length="216" mass="23706">MSLPMLQVALDNQTMDSAYETTRLIAEEVDIIEVGTILCVGEGVRAVRDLKALYPHKIVLADAKIADAGKILSRMCFEANADWVTVICCADINTAKGALDVAKEFNGDVQIELTGYWTWEQAQQWRDAGIQQVVYHRSRDAQAAGVAWGEADITAIKRLSDMGFKVTVTGGLALEDLPLFKGIPIHVFIAGRSIRDAESPVEAARQFKRSIAQLWG</sequence>
<reference key="1">
    <citation type="journal article" date="2001" name="Nature">
        <title>Complete genome sequence of Salmonella enterica serovar Typhimurium LT2.</title>
        <authorList>
            <person name="McClelland M."/>
            <person name="Sanderson K.E."/>
            <person name="Spieth J."/>
            <person name="Clifton S.W."/>
            <person name="Latreille P."/>
            <person name="Courtney L."/>
            <person name="Porwollik S."/>
            <person name="Ali J."/>
            <person name="Dante M."/>
            <person name="Du F."/>
            <person name="Hou S."/>
            <person name="Layman D."/>
            <person name="Leonard S."/>
            <person name="Nguyen C."/>
            <person name="Scott K."/>
            <person name="Holmes A."/>
            <person name="Grewal N."/>
            <person name="Mulvaney E."/>
            <person name="Ryan E."/>
            <person name="Sun H."/>
            <person name="Florea L."/>
            <person name="Miller W."/>
            <person name="Stoneking T."/>
            <person name="Nhan M."/>
            <person name="Waterston R."/>
            <person name="Wilson R.K."/>
        </authorList>
    </citation>
    <scope>NUCLEOTIDE SEQUENCE [LARGE SCALE GENOMIC DNA]</scope>
    <source>
        <strain>LT2 / SGSC1412 / ATCC 700720</strain>
    </source>
</reference>